<sequence length="397" mass="43907">MFHRIEEALEDLKQGKVVIVCDDENRENEGDFIALAEYITPETINFMITHGRGLVCVPITEGYAERLQLEPMVSHNTDSHHTAFTVSIDHVSTTTGISAHERATTIQQLLNPASKGADFNRPGHIFPLIAKEGGVLRRAGHTEAAVDLAQLCGAEPAGVICEIINEDGTMARVPDLLQCAKQFDIKMITIEDLIAYRRHHETLVTREVEITLPTDFGTFQAIGYSNSLDTKEHIALVKGDISTGEPVLVRVHSECLTGDVFGSCRCDCGPQLHAALAQIEREGKGVLLYMRQEGRGIGLLNKLRAYKLQEEGFDTVEANEKLGFPADLRDYGIGAQILKDLGLQHLRLLTNNPRKIAGLQGYDLTVTERVPLQMPAKEENKTYLQTKVNKLGHLLNL</sequence>
<organism>
    <name type="scientific">Bacillus cereus (strain 03BB102)</name>
    <dbReference type="NCBI Taxonomy" id="572264"/>
    <lineage>
        <taxon>Bacteria</taxon>
        <taxon>Bacillati</taxon>
        <taxon>Bacillota</taxon>
        <taxon>Bacilli</taxon>
        <taxon>Bacillales</taxon>
        <taxon>Bacillaceae</taxon>
        <taxon>Bacillus</taxon>
        <taxon>Bacillus cereus group</taxon>
    </lineage>
</organism>
<evidence type="ECO:0000255" key="1">
    <source>
        <dbReference type="HAMAP-Rule" id="MF_01283"/>
    </source>
</evidence>
<keyword id="KW-0342">GTP-binding</keyword>
<keyword id="KW-0378">Hydrolase</keyword>
<keyword id="KW-0456">Lyase</keyword>
<keyword id="KW-0460">Magnesium</keyword>
<keyword id="KW-0464">Manganese</keyword>
<keyword id="KW-0479">Metal-binding</keyword>
<keyword id="KW-0511">Multifunctional enzyme</keyword>
<keyword id="KW-0547">Nucleotide-binding</keyword>
<keyword id="KW-0686">Riboflavin biosynthesis</keyword>
<keyword id="KW-0862">Zinc</keyword>
<protein>
    <recommendedName>
        <fullName evidence="1">Riboflavin biosynthesis protein RibBA</fullName>
    </recommendedName>
    <domain>
        <recommendedName>
            <fullName evidence="1">3,4-dihydroxy-2-butanone 4-phosphate synthase</fullName>
            <shortName evidence="1">DHBP synthase</shortName>
            <ecNumber evidence="1">4.1.99.12</ecNumber>
        </recommendedName>
    </domain>
    <domain>
        <recommendedName>
            <fullName evidence="1">GTP cyclohydrolase-2</fullName>
            <ecNumber evidence="1">3.5.4.25</ecNumber>
        </recommendedName>
        <alternativeName>
            <fullName evidence="1">GTP cyclohydrolase II</fullName>
        </alternativeName>
    </domain>
</protein>
<dbReference type="EC" id="4.1.99.12" evidence="1"/>
<dbReference type="EC" id="3.5.4.25" evidence="1"/>
<dbReference type="EMBL" id="CP001407">
    <property type="protein sequence ID" value="ACO28254.1"/>
    <property type="molecule type" value="Genomic_DNA"/>
</dbReference>
<dbReference type="RefSeq" id="WP_000469013.1">
    <property type="nucleotide sequence ID" value="NZ_CP009318.1"/>
</dbReference>
<dbReference type="SMR" id="C1EQY5"/>
<dbReference type="GeneID" id="45024000"/>
<dbReference type="KEGG" id="bcx:BCA_4224"/>
<dbReference type="PATRIC" id="fig|572264.18.peg.4175"/>
<dbReference type="UniPathway" id="UPA00275">
    <property type="reaction ID" value="UER00399"/>
</dbReference>
<dbReference type="UniPathway" id="UPA00275">
    <property type="reaction ID" value="UER00400"/>
</dbReference>
<dbReference type="Proteomes" id="UP000002210">
    <property type="component" value="Chromosome"/>
</dbReference>
<dbReference type="GO" id="GO:0005829">
    <property type="term" value="C:cytosol"/>
    <property type="evidence" value="ECO:0007669"/>
    <property type="project" value="TreeGrafter"/>
</dbReference>
<dbReference type="GO" id="GO:0008686">
    <property type="term" value="F:3,4-dihydroxy-2-butanone-4-phosphate synthase activity"/>
    <property type="evidence" value="ECO:0007669"/>
    <property type="project" value="UniProtKB-UniRule"/>
</dbReference>
<dbReference type="GO" id="GO:0005525">
    <property type="term" value="F:GTP binding"/>
    <property type="evidence" value="ECO:0007669"/>
    <property type="project" value="UniProtKB-KW"/>
</dbReference>
<dbReference type="GO" id="GO:0003935">
    <property type="term" value="F:GTP cyclohydrolase II activity"/>
    <property type="evidence" value="ECO:0007669"/>
    <property type="project" value="UniProtKB-UniRule"/>
</dbReference>
<dbReference type="GO" id="GO:0000287">
    <property type="term" value="F:magnesium ion binding"/>
    <property type="evidence" value="ECO:0007669"/>
    <property type="project" value="UniProtKB-UniRule"/>
</dbReference>
<dbReference type="GO" id="GO:0030145">
    <property type="term" value="F:manganese ion binding"/>
    <property type="evidence" value="ECO:0007669"/>
    <property type="project" value="UniProtKB-UniRule"/>
</dbReference>
<dbReference type="GO" id="GO:0008270">
    <property type="term" value="F:zinc ion binding"/>
    <property type="evidence" value="ECO:0007669"/>
    <property type="project" value="UniProtKB-UniRule"/>
</dbReference>
<dbReference type="GO" id="GO:0009231">
    <property type="term" value="P:riboflavin biosynthetic process"/>
    <property type="evidence" value="ECO:0007669"/>
    <property type="project" value="UniProtKB-UniRule"/>
</dbReference>
<dbReference type="CDD" id="cd00641">
    <property type="entry name" value="GTP_cyclohydro2"/>
    <property type="match status" value="1"/>
</dbReference>
<dbReference type="FunFam" id="3.40.50.10990:FF:000001">
    <property type="entry name" value="Riboflavin biosynthesis protein RibBA"/>
    <property type="match status" value="1"/>
</dbReference>
<dbReference type="FunFam" id="3.90.870.10:FF:000001">
    <property type="entry name" value="Riboflavin biosynthesis protein RibBA"/>
    <property type="match status" value="1"/>
</dbReference>
<dbReference type="Gene3D" id="3.90.870.10">
    <property type="entry name" value="DHBP synthase"/>
    <property type="match status" value="1"/>
</dbReference>
<dbReference type="Gene3D" id="3.40.50.10990">
    <property type="entry name" value="GTP cyclohydrolase II"/>
    <property type="match status" value="1"/>
</dbReference>
<dbReference type="HAMAP" id="MF_00179">
    <property type="entry name" value="RibA"/>
    <property type="match status" value="1"/>
</dbReference>
<dbReference type="HAMAP" id="MF_00180">
    <property type="entry name" value="RibB"/>
    <property type="match status" value="1"/>
</dbReference>
<dbReference type="HAMAP" id="MF_01283">
    <property type="entry name" value="RibBA"/>
    <property type="match status" value="1"/>
</dbReference>
<dbReference type="InterPro" id="IPR017945">
    <property type="entry name" value="DHBP_synth_RibB-like_a/b_dom"/>
</dbReference>
<dbReference type="InterPro" id="IPR000422">
    <property type="entry name" value="DHBP_synthase_RibB"/>
</dbReference>
<dbReference type="InterPro" id="IPR032677">
    <property type="entry name" value="GTP_cyclohydro_II"/>
</dbReference>
<dbReference type="InterPro" id="IPR000926">
    <property type="entry name" value="RibA"/>
</dbReference>
<dbReference type="InterPro" id="IPR036144">
    <property type="entry name" value="RibA-like_sf"/>
</dbReference>
<dbReference type="InterPro" id="IPR016299">
    <property type="entry name" value="Riboflavin_synth_RibBA"/>
</dbReference>
<dbReference type="NCBIfam" id="NF001591">
    <property type="entry name" value="PRK00393.1"/>
    <property type="match status" value="1"/>
</dbReference>
<dbReference type="NCBIfam" id="NF006803">
    <property type="entry name" value="PRK09311.1"/>
    <property type="match status" value="1"/>
</dbReference>
<dbReference type="NCBIfam" id="TIGR00505">
    <property type="entry name" value="ribA"/>
    <property type="match status" value="1"/>
</dbReference>
<dbReference type="NCBIfam" id="TIGR00506">
    <property type="entry name" value="ribB"/>
    <property type="match status" value="1"/>
</dbReference>
<dbReference type="PANTHER" id="PTHR21327:SF18">
    <property type="entry name" value="3,4-DIHYDROXY-2-BUTANONE 4-PHOSPHATE SYNTHASE"/>
    <property type="match status" value="1"/>
</dbReference>
<dbReference type="PANTHER" id="PTHR21327">
    <property type="entry name" value="GTP CYCLOHYDROLASE II-RELATED"/>
    <property type="match status" value="1"/>
</dbReference>
<dbReference type="Pfam" id="PF00926">
    <property type="entry name" value="DHBP_synthase"/>
    <property type="match status" value="1"/>
</dbReference>
<dbReference type="Pfam" id="PF00925">
    <property type="entry name" value="GTP_cyclohydro2"/>
    <property type="match status" value="1"/>
</dbReference>
<dbReference type="PIRSF" id="PIRSF001259">
    <property type="entry name" value="RibA"/>
    <property type="match status" value="1"/>
</dbReference>
<dbReference type="SUPFAM" id="SSF142695">
    <property type="entry name" value="RibA-like"/>
    <property type="match status" value="1"/>
</dbReference>
<dbReference type="SUPFAM" id="SSF55821">
    <property type="entry name" value="YrdC/RibB"/>
    <property type="match status" value="1"/>
</dbReference>
<gene>
    <name evidence="1" type="primary">ribBA</name>
    <name type="ordered locus">BCA_4224</name>
</gene>
<comment type="function">
    <text evidence="1">Catalyzes the conversion of D-ribulose 5-phosphate to formate and 3,4-dihydroxy-2-butanone 4-phosphate.</text>
</comment>
<comment type="function">
    <text evidence="1">Catalyzes the conversion of GTP to 2,5-diamino-6-ribosylamino-4(3H)-pyrimidinone 5'-phosphate (DARP), formate and pyrophosphate.</text>
</comment>
<comment type="catalytic activity">
    <reaction evidence="1">
        <text>D-ribulose 5-phosphate = (2S)-2-hydroxy-3-oxobutyl phosphate + formate + H(+)</text>
        <dbReference type="Rhea" id="RHEA:18457"/>
        <dbReference type="ChEBI" id="CHEBI:15378"/>
        <dbReference type="ChEBI" id="CHEBI:15740"/>
        <dbReference type="ChEBI" id="CHEBI:58121"/>
        <dbReference type="ChEBI" id="CHEBI:58830"/>
        <dbReference type="EC" id="4.1.99.12"/>
    </reaction>
</comment>
<comment type="catalytic activity">
    <reaction evidence="1">
        <text>GTP + 4 H2O = 2,5-diamino-6-hydroxy-4-(5-phosphoribosylamino)-pyrimidine + formate + 2 phosphate + 3 H(+)</text>
        <dbReference type="Rhea" id="RHEA:23704"/>
        <dbReference type="ChEBI" id="CHEBI:15377"/>
        <dbReference type="ChEBI" id="CHEBI:15378"/>
        <dbReference type="ChEBI" id="CHEBI:15740"/>
        <dbReference type="ChEBI" id="CHEBI:37565"/>
        <dbReference type="ChEBI" id="CHEBI:43474"/>
        <dbReference type="ChEBI" id="CHEBI:58614"/>
        <dbReference type="EC" id="3.5.4.25"/>
    </reaction>
</comment>
<comment type="cofactor">
    <cofactor evidence="1">
        <name>Mg(2+)</name>
        <dbReference type="ChEBI" id="CHEBI:18420"/>
    </cofactor>
    <cofactor evidence="1">
        <name>Mn(2+)</name>
        <dbReference type="ChEBI" id="CHEBI:29035"/>
    </cofactor>
    <text evidence="1">Binds 2 divalent metal cations per subunit. Magnesium or manganese.</text>
</comment>
<comment type="cofactor">
    <cofactor evidence="1">
        <name>Zn(2+)</name>
        <dbReference type="ChEBI" id="CHEBI:29105"/>
    </cofactor>
    <text evidence="1">Binds 1 zinc ion per subunit.</text>
</comment>
<comment type="pathway">
    <text evidence="1">Cofactor biosynthesis; riboflavin biosynthesis; 2-hydroxy-3-oxobutyl phosphate from D-ribulose 5-phosphate: step 1/1.</text>
</comment>
<comment type="pathway">
    <text evidence="1">Cofactor biosynthesis; riboflavin biosynthesis; 5-amino-6-(D-ribitylamino)uracil from GTP: step 1/4.</text>
</comment>
<comment type="similarity">
    <text evidence="1">In the N-terminal section; belongs to the DHBP synthase family.</text>
</comment>
<comment type="similarity">
    <text evidence="1">In the C-terminal section; belongs to the GTP cyclohydrolase II family.</text>
</comment>
<accession>C1EQY5</accession>
<reference key="1">
    <citation type="submission" date="2009-02" db="EMBL/GenBank/DDBJ databases">
        <title>Genome sequence of Bacillus cereus 03BB102.</title>
        <authorList>
            <person name="Dodson R.J."/>
            <person name="Jackson P."/>
            <person name="Munk A.C."/>
            <person name="Brettin T."/>
            <person name="Bruce D."/>
            <person name="Detter C."/>
            <person name="Tapia R."/>
            <person name="Han C."/>
            <person name="Sutton G."/>
            <person name="Sims D."/>
        </authorList>
    </citation>
    <scope>NUCLEOTIDE SEQUENCE [LARGE SCALE GENOMIC DNA]</scope>
    <source>
        <strain>03BB102</strain>
    </source>
</reference>
<feature type="chain" id="PRO_1000165244" description="Riboflavin biosynthesis protein RibBA">
    <location>
        <begin position="1"/>
        <end position="397"/>
    </location>
</feature>
<feature type="region of interest" description="DHBP synthase">
    <location>
        <begin position="1"/>
        <end position="199"/>
    </location>
</feature>
<feature type="region of interest" description="GTP cyclohydrolase II">
    <location>
        <begin position="200"/>
        <end position="397"/>
    </location>
</feature>
<feature type="active site" description="Proton acceptor; for GTP cyclohydrolase activity" evidence="1">
    <location>
        <position position="327"/>
    </location>
</feature>
<feature type="active site" description="Nucleophile; for GTP cyclohydrolase activity" evidence="1">
    <location>
        <position position="329"/>
    </location>
</feature>
<feature type="binding site" evidence="1">
    <location>
        <begin position="26"/>
        <end position="27"/>
    </location>
    <ligand>
        <name>D-ribulose 5-phosphate</name>
        <dbReference type="ChEBI" id="CHEBI:58121"/>
    </ligand>
</feature>
<feature type="binding site" evidence="1">
    <location>
        <position position="27"/>
    </location>
    <ligand>
        <name>Mg(2+)</name>
        <dbReference type="ChEBI" id="CHEBI:18420"/>
        <label>1</label>
    </ligand>
</feature>
<feature type="binding site" evidence="1">
    <location>
        <position position="27"/>
    </location>
    <ligand>
        <name>Mg(2+)</name>
        <dbReference type="ChEBI" id="CHEBI:18420"/>
        <label>2</label>
    </ligand>
</feature>
<feature type="binding site" evidence="1">
    <location>
        <position position="31"/>
    </location>
    <ligand>
        <name>D-ribulose 5-phosphate</name>
        <dbReference type="ChEBI" id="CHEBI:58121"/>
    </ligand>
</feature>
<feature type="binding site" evidence="1">
    <location>
        <begin position="138"/>
        <end position="142"/>
    </location>
    <ligand>
        <name>D-ribulose 5-phosphate</name>
        <dbReference type="ChEBI" id="CHEBI:58121"/>
    </ligand>
</feature>
<feature type="binding site" evidence="1">
    <location>
        <position position="141"/>
    </location>
    <ligand>
        <name>Mg(2+)</name>
        <dbReference type="ChEBI" id="CHEBI:18420"/>
        <label>2</label>
    </ligand>
</feature>
<feature type="binding site" evidence="1">
    <location>
        <position position="162"/>
    </location>
    <ligand>
        <name>D-ribulose 5-phosphate</name>
        <dbReference type="ChEBI" id="CHEBI:58121"/>
    </ligand>
</feature>
<feature type="binding site" evidence="1">
    <location>
        <begin position="250"/>
        <end position="254"/>
    </location>
    <ligand>
        <name>GTP</name>
        <dbReference type="ChEBI" id="CHEBI:37565"/>
    </ligand>
</feature>
<feature type="binding site" evidence="1">
    <location>
        <position position="255"/>
    </location>
    <ligand>
        <name>Zn(2+)</name>
        <dbReference type="ChEBI" id="CHEBI:29105"/>
        <note>catalytic</note>
    </ligand>
</feature>
<feature type="binding site" evidence="1">
    <location>
        <position position="266"/>
    </location>
    <ligand>
        <name>Zn(2+)</name>
        <dbReference type="ChEBI" id="CHEBI:29105"/>
        <note>catalytic</note>
    </ligand>
</feature>
<feature type="binding site" evidence="1">
    <location>
        <position position="268"/>
    </location>
    <ligand>
        <name>Zn(2+)</name>
        <dbReference type="ChEBI" id="CHEBI:29105"/>
        <note>catalytic</note>
    </ligand>
</feature>
<feature type="binding site" evidence="1">
    <location>
        <position position="271"/>
    </location>
    <ligand>
        <name>GTP</name>
        <dbReference type="ChEBI" id="CHEBI:37565"/>
    </ligand>
</feature>
<feature type="binding site" evidence="1">
    <location>
        <begin position="293"/>
        <end position="295"/>
    </location>
    <ligand>
        <name>GTP</name>
        <dbReference type="ChEBI" id="CHEBI:37565"/>
    </ligand>
</feature>
<feature type="binding site" evidence="1">
    <location>
        <position position="315"/>
    </location>
    <ligand>
        <name>GTP</name>
        <dbReference type="ChEBI" id="CHEBI:37565"/>
    </ligand>
</feature>
<feature type="binding site" evidence="1">
    <location>
        <position position="350"/>
    </location>
    <ligand>
        <name>GTP</name>
        <dbReference type="ChEBI" id="CHEBI:37565"/>
    </ligand>
</feature>
<feature type="binding site" evidence="1">
    <location>
        <position position="355"/>
    </location>
    <ligand>
        <name>GTP</name>
        <dbReference type="ChEBI" id="CHEBI:37565"/>
    </ligand>
</feature>
<feature type="site" description="Essential for DHBP synthase activity" evidence="1">
    <location>
        <position position="124"/>
    </location>
</feature>
<feature type="site" description="Essential for DHBP synthase activity" evidence="1">
    <location>
        <position position="162"/>
    </location>
</feature>
<proteinExistence type="inferred from homology"/>
<name>RIBBA_BACC3</name>